<organism>
    <name type="scientific">Pseudomonas syringae pv. tomato (strain ATCC BAA-871 / DC3000)</name>
    <dbReference type="NCBI Taxonomy" id="223283"/>
    <lineage>
        <taxon>Bacteria</taxon>
        <taxon>Pseudomonadati</taxon>
        <taxon>Pseudomonadota</taxon>
        <taxon>Gammaproteobacteria</taxon>
        <taxon>Pseudomonadales</taxon>
        <taxon>Pseudomonadaceae</taxon>
        <taxon>Pseudomonas</taxon>
    </lineage>
</organism>
<protein>
    <recommendedName>
        <fullName evidence="1">Ribosomal RNA small subunit methyltransferase G</fullName>
        <ecNumber evidence="1">2.1.1.170</ecNumber>
    </recommendedName>
    <alternativeName>
        <fullName evidence="1">16S rRNA 7-methylguanosine methyltransferase</fullName>
        <shortName evidence="1">16S rRNA m7G methyltransferase</shortName>
    </alternativeName>
</protein>
<sequence length="211" mass="23534">MVTPQHAQELSTGARELGIDLSEAQHEQLLAYLALLIKWNKAYNLTAVRNPDEMVSRHLLDSLSVVPFIEGTRWMDVGSGGGMPGIPMAILFPERNISLLDSNGKKTRFQTQVKLELKLDNLEVIHSRAENYQPDVPFDGIISRAFSSLEDFAGWTRHMGDVNTRWLAMKGLHPADELVALPSDFHLDSAQALTVPGCQGQRHLLILRRTA</sequence>
<keyword id="KW-0963">Cytoplasm</keyword>
<keyword id="KW-0489">Methyltransferase</keyword>
<keyword id="KW-1185">Reference proteome</keyword>
<keyword id="KW-0698">rRNA processing</keyword>
<keyword id="KW-0949">S-adenosyl-L-methionine</keyword>
<keyword id="KW-0808">Transferase</keyword>
<proteinExistence type="inferred from homology"/>
<evidence type="ECO:0000255" key="1">
    <source>
        <dbReference type="HAMAP-Rule" id="MF_00074"/>
    </source>
</evidence>
<reference key="1">
    <citation type="journal article" date="2003" name="Proc. Natl. Acad. Sci. U.S.A.">
        <title>The complete genome sequence of the Arabidopsis and tomato pathogen Pseudomonas syringae pv. tomato DC3000.</title>
        <authorList>
            <person name="Buell C.R."/>
            <person name="Joardar V."/>
            <person name="Lindeberg M."/>
            <person name="Selengut J."/>
            <person name="Paulsen I.T."/>
            <person name="Gwinn M.L."/>
            <person name="Dodson R.J."/>
            <person name="DeBoy R.T."/>
            <person name="Durkin A.S."/>
            <person name="Kolonay J.F."/>
            <person name="Madupu R."/>
            <person name="Daugherty S.C."/>
            <person name="Brinkac L.M."/>
            <person name="Beanan M.J."/>
            <person name="Haft D.H."/>
            <person name="Nelson W.C."/>
            <person name="Davidsen T.M."/>
            <person name="Zafar N."/>
            <person name="Zhou L."/>
            <person name="Liu J."/>
            <person name="Yuan Q."/>
            <person name="Khouri H.M."/>
            <person name="Fedorova N.B."/>
            <person name="Tran B."/>
            <person name="Russell D."/>
            <person name="Berry K.J."/>
            <person name="Utterback T.R."/>
            <person name="Van Aken S.E."/>
            <person name="Feldblyum T.V."/>
            <person name="D'Ascenzo M."/>
            <person name="Deng W.-L."/>
            <person name="Ramos A.R."/>
            <person name="Alfano J.R."/>
            <person name="Cartinhour S."/>
            <person name="Chatterjee A.K."/>
            <person name="Delaney T.P."/>
            <person name="Lazarowitz S.G."/>
            <person name="Martin G.B."/>
            <person name="Schneider D.J."/>
            <person name="Tang X."/>
            <person name="Bender C.L."/>
            <person name="White O."/>
            <person name="Fraser C.M."/>
            <person name="Collmer A."/>
        </authorList>
    </citation>
    <scope>NUCLEOTIDE SEQUENCE [LARGE SCALE GENOMIC DNA]</scope>
    <source>
        <strain>ATCC BAA-871 / DC3000</strain>
    </source>
</reference>
<gene>
    <name evidence="1" type="primary">rsmG</name>
    <name type="ordered locus">PSPTO_5609</name>
</gene>
<name>RSMG_PSESM</name>
<comment type="function">
    <text evidence="1">Specifically methylates the N7 position of guanine in position 527 of 16S rRNA.</text>
</comment>
<comment type="catalytic activity">
    <reaction evidence="1">
        <text>guanosine(527) in 16S rRNA + S-adenosyl-L-methionine = N(7)-methylguanosine(527) in 16S rRNA + S-adenosyl-L-homocysteine</text>
        <dbReference type="Rhea" id="RHEA:42732"/>
        <dbReference type="Rhea" id="RHEA-COMP:10209"/>
        <dbReference type="Rhea" id="RHEA-COMP:10210"/>
        <dbReference type="ChEBI" id="CHEBI:57856"/>
        <dbReference type="ChEBI" id="CHEBI:59789"/>
        <dbReference type="ChEBI" id="CHEBI:74269"/>
        <dbReference type="ChEBI" id="CHEBI:74480"/>
        <dbReference type="EC" id="2.1.1.170"/>
    </reaction>
</comment>
<comment type="subcellular location">
    <subcellularLocation>
        <location evidence="1">Cytoplasm</location>
    </subcellularLocation>
</comment>
<comment type="similarity">
    <text evidence="1">Belongs to the methyltransferase superfamily. RNA methyltransferase RsmG family.</text>
</comment>
<feature type="chain" id="PRO_0000184311" description="Ribosomal RNA small subunit methyltransferase G">
    <location>
        <begin position="1"/>
        <end position="211"/>
    </location>
</feature>
<feature type="binding site" evidence="1">
    <location>
        <position position="78"/>
    </location>
    <ligand>
        <name>S-adenosyl-L-methionine</name>
        <dbReference type="ChEBI" id="CHEBI:59789"/>
    </ligand>
</feature>
<feature type="binding site" evidence="1">
    <location>
        <position position="83"/>
    </location>
    <ligand>
        <name>S-adenosyl-L-methionine</name>
        <dbReference type="ChEBI" id="CHEBI:59789"/>
    </ligand>
</feature>
<feature type="binding site" evidence="1">
    <location>
        <begin position="129"/>
        <end position="130"/>
    </location>
    <ligand>
        <name>S-adenosyl-L-methionine</name>
        <dbReference type="ChEBI" id="CHEBI:59789"/>
    </ligand>
</feature>
<feature type="binding site" evidence="1">
    <location>
        <position position="144"/>
    </location>
    <ligand>
        <name>S-adenosyl-L-methionine</name>
        <dbReference type="ChEBI" id="CHEBI:59789"/>
    </ligand>
</feature>
<dbReference type="EC" id="2.1.1.170" evidence="1"/>
<dbReference type="EMBL" id="AE016853">
    <property type="protein sequence ID" value="AAO59022.1"/>
    <property type="molecule type" value="Genomic_DNA"/>
</dbReference>
<dbReference type="RefSeq" id="NP_795327.1">
    <property type="nucleotide sequence ID" value="NC_004578.1"/>
</dbReference>
<dbReference type="SMR" id="Q87TS4"/>
<dbReference type="STRING" id="223283.PSPTO_5609"/>
<dbReference type="KEGG" id="pst:PSPTO_5609"/>
<dbReference type="PATRIC" id="fig|223283.9.peg.5746"/>
<dbReference type="eggNOG" id="COG0357">
    <property type="taxonomic scope" value="Bacteria"/>
</dbReference>
<dbReference type="HOGENOM" id="CLU_065341_2_2_6"/>
<dbReference type="OrthoDB" id="9808773at2"/>
<dbReference type="PhylomeDB" id="Q87TS4"/>
<dbReference type="Proteomes" id="UP000002515">
    <property type="component" value="Chromosome"/>
</dbReference>
<dbReference type="GO" id="GO:0005829">
    <property type="term" value="C:cytosol"/>
    <property type="evidence" value="ECO:0007669"/>
    <property type="project" value="TreeGrafter"/>
</dbReference>
<dbReference type="GO" id="GO:0070043">
    <property type="term" value="F:rRNA (guanine-N7-)-methyltransferase activity"/>
    <property type="evidence" value="ECO:0007669"/>
    <property type="project" value="UniProtKB-UniRule"/>
</dbReference>
<dbReference type="Gene3D" id="3.40.50.150">
    <property type="entry name" value="Vaccinia Virus protein VP39"/>
    <property type="match status" value="1"/>
</dbReference>
<dbReference type="HAMAP" id="MF_00074">
    <property type="entry name" value="16SrRNA_methyltr_G"/>
    <property type="match status" value="1"/>
</dbReference>
<dbReference type="InterPro" id="IPR003682">
    <property type="entry name" value="rRNA_ssu_MeTfrase_G"/>
</dbReference>
<dbReference type="InterPro" id="IPR029063">
    <property type="entry name" value="SAM-dependent_MTases_sf"/>
</dbReference>
<dbReference type="NCBIfam" id="TIGR00138">
    <property type="entry name" value="rsmG_gidB"/>
    <property type="match status" value="1"/>
</dbReference>
<dbReference type="PANTHER" id="PTHR31760">
    <property type="entry name" value="S-ADENOSYL-L-METHIONINE-DEPENDENT METHYLTRANSFERASES SUPERFAMILY PROTEIN"/>
    <property type="match status" value="1"/>
</dbReference>
<dbReference type="PANTHER" id="PTHR31760:SF0">
    <property type="entry name" value="S-ADENOSYL-L-METHIONINE-DEPENDENT METHYLTRANSFERASES SUPERFAMILY PROTEIN"/>
    <property type="match status" value="1"/>
</dbReference>
<dbReference type="Pfam" id="PF02527">
    <property type="entry name" value="GidB"/>
    <property type="match status" value="1"/>
</dbReference>
<dbReference type="PIRSF" id="PIRSF003078">
    <property type="entry name" value="GidB"/>
    <property type="match status" value="1"/>
</dbReference>
<dbReference type="SUPFAM" id="SSF53335">
    <property type="entry name" value="S-adenosyl-L-methionine-dependent methyltransferases"/>
    <property type="match status" value="1"/>
</dbReference>
<accession>Q87TS4</accession>